<keyword id="KW-0997">Cell inner membrane</keyword>
<keyword id="KW-1003">Cell membrane</keyword>
<keyword id="KW-0472">Membrane</keyword>
<keyword id="KW-1185">Reference proteome</keyword>
<keyword id="KW-0812">Transmembrane</keyword>
<keyword id="KW-1133">Transmembrane helix</keyword>
<keyword id="KW-0813">Transport</keyword>
<feature type="chain" id="PRO_0000300563" description="p-hydroxybenzoic acid efflux pump subunit AaeB">
    <location>
        <begin position="1"/>
        <end position="655"/>
    </location>
</feature>
<feature type="transmembrane region" description="Helical" evidence="1">
    <location>
        <begin position="13"/>
        <end position="33"/>
    </location>
</feature>
<feature type="transmembrane region" description="Helical" evidence="1">
    <location>
        <begin position="38"/>
        <end position="58"/>
    </location>
</feature>
<feature type="transmembrane region" description="Helical" evidence="1">
    <location>
        <begin position="69"/>
        <end position="89"/>
    </location>
</feature>
<feature type="transmembrane region" description="Helical" evidence="1">
    <location>
        <begin position="93"/>
        <end position="113"/>
    </location>
</feature>
<feature type="transmembrane region" description="Helical" evidence="1">
    <location>
        <begin position="121"/>
        <end position="141"/>
    </location>
</feature>
<feature type="transmembrane region" description="Helical" evidence="1">
    <location>
        <begin position="152"/>
        <end position="172"/>
    </location>
</feature>
<feature type="transmembrane region" description="Helical" evidence="1">
    <location>
        <begin position="370"/>
        <end position="390"/>
    </location>
</feature>
<feature type="transmembrane region" description="Helical" evidence="1">
    <location>
        <begin position="407"/>
        <end position="427"/>
    </location>
</feature>
<feature type="transmembrane region" description="Helical" evidence="1">
    <location>
        <begin position="431"/>
        <end position="451"/>
    </location>
</feature>
<feature type="transmembrane region" description="Helical" evidence="1">
    <location>
        <begin position="459"/>
        <end position="479"/>
    </location>
</feature>
<feature type="transmembrane region" description="Helical" evidence="1">
    <location>
        <begin position="482"/>
        <end position="502"/>
    </location>
</feature>
<dbReference type="EMBL" id="CP000468">
    <property type="protein sequence ID" value="ABJ02723.1"/>
    <property type="molecule type" value="Genomic_DNA"/>
</dbReference>
<dbReference type="RefSeq" id="WP_000510964.1">
    <property type="nucleotide sequence ID" value="NZ_CADILS010000003.1"/>
</dbReference>
<dbReference type="SMR" id="A1AGD3"/>
<dbReference type="KEGG" id="ecv:APECO1_3204"/>
<dbReference type="HOGENOM" id="CLU_027647_0_0_6"/>
<dbReference type="Proteomes" id="UP000008216">
    <property type="component" value="Chromosome"/>
</dbReference>
<dbReference type="GO" id="GO:0005886">
    <property type="term" value="C:plasma membrane"/>
    <property type="evidence" value="ECO:0007669"/>
    <property type="project" value="UniProtKB-SubCell"/>
</dbReference>
<dbReference type="GO" id="GO:0022857">
    <property type="term" value="F:transmembrane transporter activity"/>
    <property type="evidence" value="ECO:0007669"/>
    <property type="project" value="UniProtKB-UniRule"/>
</dbReference>
<dbReference type="GO" id="GO:0046942">
    <property type="term" value="P:carboxylic acid transport"/>
    <property type="evidence" value="ECO:0007669"/>
    <property type="project" value="InterPro"/>
</dbReference>
<dbReference type="HAMAP" id="MF_01545">
    <property type="entry name" value="AaeB"/>
    <property type="match status" value="1"/>
</dbReference>
<dbReference type="InterPro" id="IPR006726">
    <property type="entry name" value="PHBA_efflux_AaeB/fusaric-R"/>
</dbReference>
<dbReference type="InterPro" id="IPR023706">
    <property type="entry name" value="PHBA_efflux_pump_AaeB"/>
</dbReference>
<dbReference type="NCBIfam" id="NF007916">
    <property type="entry name" value="PRK10631.1"/>
    <property type="match status" value="1"/>
</dbReference>
<dbReference type="PANTHER" id="PTHR30509:SF9">
    <property type="entry name" value="MULTIDRUG RESISTANCE PROTEIN MDTO"/>
    <property type="match status" value="1"/>
</dbReference>
<dbReference type="PANTHER" id="PTHR30509">
    <property type="entry name" value="P-HYDROXYBENZOIC ACID EFFLUX PUMP SUBUNIT-RELATED"/>
    <property type="match status" value="1"/>
</dbReference>
<dbReference type="Pfam" id="PF04632">
    <property type="entry name" value="FUSC"/>
    <property type="match status" value="1"/>
</dbReference>
<sequence length="655" mass="73641">MGIFSIANQHIRFAVKLATAIVLALFVGFHFQLETPRWAVLTAAIVAAGPAFAAGGEPYSGAIRYRGFLRIIGTFIGCIAGLVIIIAMIRAPLLMILVCCIWAGFCTWISSLVRIENSYAWGLAGYTALIIVITIQPEPLLTPQFAVERCSEIVIGIVCAIMADLLFSPRSIKQEVDRELESLLVAQYQLMQLCIKHGDGEVVDKAWGDLVRRTTALQGMRSNLNMESSRWARANRRLKAINTLSLTLITQSCETYLIQNTRPELITDTFREFFDTPVETAQDVHKQLKRLRRVIAWTGERETPVTIYSWVAAATRYQLLKRGVISNTKINATEEEILQGEPEVKVESAERHHAMVNFWRTTLSCILGTLFWLWTGWTSGSGAMVMIAVVTSLAMRLPNPRMVAIDFIYGTLAALPLGLLYFLVIIPNTQQSMLLLCISLAVLGFFLGIEVQKRRLGSMGALASTINIIVLDNPMTFHFSQFLDSALGQIVGCVLAFTVILLVRDKSRDRTGRVLLNQFVSAAVSAMTTNVARRKENHLPALYQQLFLLMNKFPGDLPKFRLALTMIIAHQRLRDAPIPVNEDLSAFHRQMRRTADHVISARSDDKRRRYFGQLLEELEIYQEKLRIWQAPPQVTEPVHRLTGMLHKYQHALTDS</sequence>
<reference key="1">
    <citation type="journal article" date="2007" name="J. Bacteriol.">
        <title>The genome sequence of avian pathogenic Escherichia coli strain O1:K1:H7 shares strong similarities with human extraintestinal pathogenic E. coli genomes.</title>
        <authorList>
            <person name="Johnson T.J."/>
            <person name="Kariyawasam S."/>
            <person name="Wannemuehler Y."/>
            <person name="Mangiamele P."/>
            <person name="Johnson S.J."/>
            <person name="Doetkott C."/>
            <person name="Skyberg J.A."/>
            <person name="Lynne A.M."/>
            <person name="Johnson J.R."/>
            <person name="Nolan L.K."/>
        </authorList>
    </citation>
    <scope>NUCLEOTIDE SEQUENCE [LARGE SCALE GENOMIC DNA]</scope>
</reference>
<organism>
    <name type="scientific">Escherichia coli O1:K1 / APEC</name>
    <dbReference type="NCBI Taxonomy" id="405955"/>
    <lineage>
        <taxon>Bacteria</taxon>
        <taxon>Pseudomonadati</taxon>
        <taxon>Pseudomonadota</taxon>
        <taxon>Gammaproteobacteria</taxon>
        <taxon>Enterobacterales</taxon>
        <taxon>Enterobacteriaceae</taxon>
        <taxon>Escherichia</taxon>
    </lineage>
</organism>
<comment type="function">
    <text evidence="1">Forms an efflux pump with AaeA. Could function as a metabolic relief valve, allowing to eliminate certain compounds when they accumulate to high levels in the cell.</text>
</comment>
<comment type="subcellular location">
    <subcellularLocation>
        <location evidence="1">Cell inner membrane</location>
        <topology evidence="1">Multi-pass membrane protein</topology>
    </subcellularLocation>
</comment>
<comment type="induction">
    <text evidence="1">Positively coregulated with aaeA and aaeX by AaeR.</text>
</comment>
<comment type="similarity">
    <text evidence="1">Belongs to the aromatic acid exporter ArAE (TC 2.A.85) family.</text>
</comment>
<name>AAEB_ECOK1</name>
<proteinExistence type="inferred from homology"/>
<evidence type="ECO:0000255" key="1">
    <source>
        <dbReference type="HAMAP-Rule" id="MF_01545"/>
    </source>
</evidence>
<accession>A1AGD3</accession>
<gene>
    <name evidence="1" type="primary">aaeB</name>
    <name type="ordered locus">Ecok1_32290</name>
    <name type="ORF">APECO1_3204</name>
</gene>
<protein>
    <recommendedName>
        <fullName evidence="1">p-hydroxybenzoic acid efflux pump subunit AaeB</fullName>
        <shortName evidence="1">pHBA efflux pump protein B</shortName>
    </recommendedName>
</protein>